<evidence type="ECO:0000250" key="1"/>
<evidence type="ECO:0000255" key="2">
    <source>
        <dbReference type="PROSITE-ProRule" id="PRU00711"/>
    </source>
</evidence>
<keyword id="KW-0004">4Fe-4S</keyword>
<keyword id="KW-0903">Direct protein sequencing</keyword>
<keyword id="KW-0249">Electron transport</keyword>
<keyword id="KW-0408">Iron</keyword>
<keyword id="KW-0411">Iron-sulfur</keyword>
<keyword id="KW-0479">Metal-binding</keyword>
<keyword id="KW-0677">Repeat</keyword>
<keyword id="KW-0813">Transport</keyword>
<proteinExistence type="evidence at protein level"/>
<comment type="function">
    <text>Ferredoxins are iron-sulfur proteins that transfer electrons in a wide variety of metabolic reactions.</text>
</comment>
<comment type="cofactor">
    <cofactor>
        <name>[4Fe-4S] cluster</name>
        <dbReference type="ChEBI" id="CHEBI:49883"/>
    </cofactor>
    <text>Binds 2 [4Fe-4S] clusters.</text>
</comment>
<feature type="chain" id="PRO_0000159121" description="Ferredoxin">
    <location>
        <begin position="1"/>
        <end position="61"/>
    </location>
</feature>
<feature type="domain" description="4Fe-4S ferredoxin-type" evidence="2">
    <location>
        <begin position="2"/>
        <end position="28"/>
    </location>
</feature>
<feature type="binding site" evidence="1">
    <location>
        <position position="8"/>
    </location>
    <ligand>
        <name>[4Fe-4S] cluster</name>
        <dbReference type="ChEBI" id="CHEBI:49883"/>
        <label>1</label>
    </ligand>
</feature>
<feature type="binding site" evidence="1">
    <location>
        <position position="11"/>
    </location>
    <ligand>
        <name>[4Fe-4S] cluster</name>
        <dbReference type="ChEBI" id="CHEBI:49883"/>
        <label>1</label>
    </ligand>
</feature>
<feature type="binding site" evidence="1">
    <location>
        <position position="14"/>
    </location>
    <ligand>
        <name>[4Fe-4S] cluster</name>
        <dbReference type="ChEBI" id="CHEBI:49883"/>
        <label>1</label>
    </ligand>
</feature>
<feature type="binding site" evidence="1">
    <location>
        <position position="18"/>
    </location>
    <ligand>
        <name>[4Fe-4S] cluster</name>
        <dbReference type="ChEBI" id="CHEBI:49883"/>
        <label>2</label>
    </ligand>
</feature>
<feature type="binding site" evidence="1">
    <location>
        <position position="37"/>
    </location>
    <ligand>
        <name>[4Fe-4S] cluster</name>
        <dbReference type="ChEBI" id="CHEBI:49883"/>
        <label>2</label>
    </ligand>
</feature>
<feature type="binding site" evidence="1">
    <location>
        <position position="40"/>
    </location>
    <ligand>
        <name>[4Fe-4S] cluster</name>
        <dbReference type="ChEBI" id="CHEBI:49883"/>
        <label>2</label>
    </ligand>
</feature>
<feature type="binding site" evidence="1">
    <location>
        <position position="49"/>
    </location>
    <ligand>
        <name>[4Fe-4S] cluster</name>
        <dbReference type="ChEBI" id="CHEBI:49883"/>
        <label>2</label>
    </ligand>
</feature>
<feature type="binding site" evidence="1">
    <location>
        <position position="53"/>
    </location>
    <ligand>
        <name>[4Fe-4S] cluster</name>
        <dbReference type="ChEBI" id="CHEBI:49883"/>
        <label>1</label>
    </ligand>
</feature>
<reference key="1">
    <citation type="journal article" date="1978" name="J. Biochem.">
        <title>Amino acid sequence of a ferredoxin from Chlorobium thiosulfatophilum strain Tassajara, a photosynthetic green sulfur bacterium.</title>
        <authorList>
            <person name="Hase T."/>
            <person name="Wakabayashi S."/>
            <person name="Matsubara H."/>
            <person name="Evans M.C.W."/>
            <person name="Jennings J.V."/>
        </authorList>
    </citation>
    <scope>PROTEIN SEQUENCE</scope>
    <source>
        <strain>DSM 249 / 6230 / Tassajara</strain>
    </source>
</reference>
<sequence>ALYITEECTYCGACEPECPTNAISAGSEIYVIDAAGCTECVGFADAPACAAVCPAECIVQG</sequence>
<protein>
    <recommendedName>
        <fullName>Ferredoxin</fullName>
    </recommendedName>
</protein>
<name>FER_CHLTI</name>
<accession>P00205</accession>
<organism>
    <name type="scientific">Chlorobaculum thiosulfatiphilum</name>
    <name type="common">Chlorobium limicola f.sp. thiosulfatophilum</name>
    <dbReference type="NCBI Taxonomy" id="115852"/>
    <lineage>
        <taxon>Bacteria</taxon>
        <taxon>Pseudomonadati</taxon>
        <taxon>Chlorobiota</taxon>
        <taxon>Chlorobiia</taxon>
        <taxon>Chlorobiales</taxon>
        <taxon>Chlorobiaceae</taxon>
        <taxon>Chlorobaculum</taxon>
    </lineage>
</organism>
<dbReference type="SMR" id="P00205"/>
<dbReference type="GO" id="GO:0051539">
    <property type="term" value="F:4 iron, 4 sulfur cluster binding"/>
    <property type="evidence" value="ECO:0007669"/>
    <property type="project" value="UniProtKB-KW"/>
</dbReference>
<dbReference type="GO" id="GO:0046872">
    <property type="term" value="F:metal ion binding"/>
    <property type="evidence" value="ECO:0007669"/>
    <property type="project" value="UniProtKB-KW"/>
</dbReference>
<dbReference type="FunFam" id="3.30.70.20:FF:000045">
    <property type="entry name" value="Ferredoxin, 4Fe-4S"/>
    <property type="match status" value="1"/>
</dbReference>
<dbReference type="Gene3D" id="3.30.70.20">
    <property type="match status" value="1"/>
</dbReference>
<dbReference type="InterPro" id="IPR017896">
    <property type="entry name" value="4Fe4S_Fe-S-bd"/>
</dbReference>
<dbReference type="InterPro" id="IPR017900">
    <property type="entry name" value="4Fe4S_Fe_S_CS"/>
</dbReference>
<dbReference type="Pfam" id="PF00037">
    <property type="entry name" value="Fer4"/>
    <property type="match status" value="1"/>
</dbReference>
<dbReference type="SUPFAM" id="SSF54862">
    <property type="entry name" value="4Fe-4S ferredoxins"/>
    <property type="match status" value="1"/>
</dbReference>
<dbReference type="PROSITE" id="PS00198">
    <property type="entry name" value="4FE4S_FER_1"/>
    <property type="match status" value="1"/>
</dbReference>
<dbReference type="PROSITE" id="PS51379">
    <property type="entry name" value="4FE4S_FER_2"/>
    <property type="match status" value="1"/>
</dbReference>